<feature type="chain" id="PRO_1000054994" description="Small ribosomal subunit protein uS17">
    <location>
        <begin position="1"/>
        <end position="88"/>
    </location>
</feature>
<dbReference type="EMBL" id="CP000554">
    <property type="protein sequence ID" value="ABM79046.1"/>
    <property type="molecule type" value="Genomic_DNA"/>
</dbReference>
<dbReference type="RefSeq" id="WP_011826912.1">
    <property type="nucleotide sequence ID" value="NC_008820.1"/>
</dbReference>
<dbReference type="SMR" id="A2CC36"/>
<dbReference type="STRING" id="59922.P9303_23111"/>
<dbReference type="KEGG" id="pmf:P9303_23111"/>
<dbReference type="HOGENOM" id="CLU_073626_1_2_3"/>
<dbReference type="BioCyc" id="PMAR59922:G1G80-2028-MONOMER"/>
<dbReference type="Proteomes" id="UP000002274">
    <property type="component" value="Chromosome"/>
</dbReference>
<dbReference type="GO" id="GO:0022627">
    <property type="term" value="C:cytosolic small ribosomal subunit"/>
    <property type="evidence" value="ECO:0007669"/>
    <property type="project" value="TreeGrafter"/>
</dbReference>
<dbReference type="GO" id="GO:0019843">
    <property type="term" value="F:rRNA binding"/>
    <property type="evidence" value="ECO:0007669"/>
    <property type="project" value="UniProtKB-UniRule"/>
</dbReference>
<dbReference type="GO" id="GO:0003735">
    <property type="term" value="F:structural constituent of ribosome"/>
    <property type="evidence" value="ECO:0007669"/>
    <property type="project" value="InterPro"/>
</dbReference>
<dbReference type="GO" id="GO:0006412">
    <property type="term" value="P:translation"/>
    <property type="evidence" value="ECO:0007669"/>
    <property type="project" value="UniProtKB-UniRule"/>
</dbReference>
<dbReference type="CDD" id="cd00364">
    <property type="entry name" value="Ribosomal_uS17"/>
    <property type="match status" value="1"/>
</dbReference>
<dbReference type="Gene3D" id="2.40.50.140">
    <property type="entry name" value="Nucleic acid-binding proteins"/>
    <property type="match status" value="1"/>
</dbReference>
<dbReference type="HAMAP" id="MF_01345_B">
    <property type="entry name" value="Ribosomal_uS17_B"/>
    <property type="match status" value="1"/>
</dbReference>
<dbReference type="InterPro" id="IPR012340">
    <property type="entry name" value="NA-bd_OB-fold"/>
</dbReference>
<dbReference type="InterPro" id="IPR000266">
    <property type="entry name" value="Ribosomal_uS17"/>
</dbReference>
<dbReference type="InterPro" id="IPR019984">
    <property type="entry name" value="Ribosomal_uS17_bact/chlr"/>
</dbReference>
<dbReference type="InterPro" id="IPR019979">
    <property type="entry name" value="Ribosomal_uS17_CS"/>
</dbReference>
<dbReference type="NCBIfam" id="NF004123">
    <property type="entry name" value="PRK05610.1"/>
    <property type="match status" value="1"/>
</dbReference>
<dbReference type="NCBIfam" id="TIGR03635">
    <property type="entry name" value="uS17_bact"/>
    <property type="match status" value="1"/>
</dbReference>
<dbReference type="PANTHER" id="PTHR10744">
    <property type="entry name" value="40S RIBOSOMAL PROTEIN S11 FAMILY MEMBER"/>
    <property type="match status" value="1"/>
</dbReference>
<dbReference type="PANTHER" id="PTHR10744:SF1">
    <property type="entry name" value="SMALL RIBOSOMAL SUBUNIT PROTEIN US17M"/>
    <property type="match status" value="1"/>
</dbReference>
<dbReference type="Pfam" id="PF00366">
    <property type="entry name" value="Ribosomal_S17"/>
    <property type="match status" value="1"/>
</dbReference>
<dbReference type="PRINTS" id="PR00973">
    <property type="entry name" value="RIBOSOMALS17"/>
</dbReference>
<dbReference type="SUPFAM" id="SSF50249">
    <property type="entry name" value="Nucleic acid-binding proteins"/>
    <property type="match status" value="1"/>
</dbReference>
<dbReference type="PROSITE" id="PS00056">
    <property type="entry name" value="RIBOSOMAL_S17"/>
    <property type="match status" value="1"/>
</dbReference>
<evidence type="ECO:0000255" key="1">
    <source>
        <dbReference type="HAMAP-Rule" id="MF_01345"/>
    </source>
</evidence>
<evidence type="ECO:0000305" key="2"/>
<protein>
    <recommendedName>
        <fullName evidence="1">Small ribosomal subunit protein uS17</fullName>
    </recommendedName>
    <alternativeName>
        <fullName evidence="2">30S ribosomal protein S17</fullName>
    </alternativeName>
</protein>
<accession>A2CC36</accession>
<keyword id="KW-0687">Ribonucleoprotein</keyword>
<keyword id="KW-0689">Ribosomal protein</keyword>
<keyword id="KW-0694">RNA-binding</keyword>
<keyword id="KW-0699">rRNA-binding</keyword>
<gene>
    <name evidence="1" type="primary">rpsQ</name>
    <name evidence="1" type="synonym">rps17</name>
    <name type="ordered locus">P9303_23111</name>
</gene>
<proteinExistence type="inferred from homology"/>
<name>RS17_PROM3</name>
<reference key="1">
    <citation type="journal article" date="2007" name="PLoS Genet.">
        <title>Patterns and implications of gene gain and loss in the evolution of Prochlorococcus.</title>
        <authorList>
            <person name="Kettler G.C."/>
            <person name="Martiny A.C."/>
            <person name="Huang K."/>
            <person name="Zucker J."/>
            <person name="Coleman M.L."/>
            <person name="Rodrigue S."/>
            <person name="Chen F."/>
            <person name="Lapidus A."/>
            <person name="Ferriera S."/>
            <person name="Johnson J."/>
            <person name="Steglich C."/>
            <person name="Church G.M."/>
            <person name="Richardson P."/>
            <person name="Chisholm S.W."/>
        </authorList>
    </citation>
    <scope>NUCLEOTIDE SEQUENCE [LARGE SCALE GENOMIC DNA]</scope>
    <source>
        <strain>MIT 9303</strain>
    </source>
</reference>
<comment type="function">
    <text evidence="1">One of the primary rRNA binding proteins, it binds specifically to the 5'-end of 16S ribosomal RNA.</text>
</comment>
<comment type="subunit">
    <text evidence="1">Part of the 30S ribosomal subunit.</text>
</comment>
<comment type="similarity">
    <text evidence="1">Belongs to the universal ribosomal protein uS17 family.</text>
</comment>
<organism>
    <name type="scientific">Prochlorococcus marinus (strain MIT 9303)</name>
    <dbReference type="NCBI Taxonomy" id="59922"/>
    <lineage>
        <taxon>Bacteria</taxon>
        <taxon>Bacillati</taxon>
        <taxon>Cyanobacteriota</taxon>
        <taxon>Cyanophyceae</taxon>
        <taxon>Synechococcales</taxon>
        <taxon>Prochlorococcaceae</taxon>
        <taxon>Prochlorococcus</taxon>
    </lineage>
</organism>
<sequence>MALKERLGTVVSDKMDKTVVVAVENRFPHPIYQKTVSRTTRYKAHDAGNTCRIGDRVRITETRPISRSKRWTVAEVLSHSPKAQEVST</sequence>